<evidence type="ECO:0000250" key="1"/>
<evidence type="ECO:0000255" key="2">
    <source>
        <dbReference type="PROSITE-ProRule" id="PRU01210"/>
    </source>
</evidence>
<evidence type="ECO:0000269" key="3">
    <source>
    </source>
</evidence>
<evidence type="ECO:0000305" key="4"/>
<organism>
    <name type="scientific">Tityus zulianus</name>
    <name type="common">Venezuelan scorpion</name>
    <dbReference type="NCBI Taxonomy" id="288787"/>
    <lineage>
        <taxon>Eukaryota</taxon>
        <taxon>Metazoa</taxon>
        <taxon>Ecdysozoa</taxon>
        <taxon>Arthropoda</taxon>
        <taxon>Chelicerata</taxon>
        <taxon>Arachnida</taxon>
        <taxon>Scorpiones</taxon>
        <taxon>Buthida</taxon>
        <taxon>Buthoidea</taxon>
        <taxon>Buthidae</taxon>
        <taxon>Tityus</taxon>
    </lineage>
</organism>
<sequence length="69" mass="7764">IEVVMGGKEGYLLDKSNGCKRSCFFGSTSWCNTECKSKSAEKGYCAWPSCYCYGFSDDSKMWDLKTNKC</sequence>
<dbReference type="EMBL" id="DQ075241">
    <property type="protein sequence ID" value="AAZ29720.1"/>
    <property type="molecule type" value="mRNA"/>
</dbReference>
<dbReference type="SMR" id="Q1I165"/>
<dbReference type="GO" id="GO:0005576">
    <property type="term" value="C:extracellular region"/>
    <property type="evidence" value="ECO:0007669"/>
    <property type="project" value="UniProtKB-SubCell"/>
</dbReference>
<dbReference type="GO" id="GO:0019871">
    <property type="term" value="F:sodium channel inhibitor activity"/>
    <property type="evidence" value="ECO:0007669"/>
    <property type="project" value="InterPro"/>
</dbReference>
<dbReference type="GO" id="GO:0090729">
    <property type="term" value="F:toxin activity"/>
    <property type="evidence" value="ECO:0007669"/>
    <property type="project" value="UniProtKB-KW"/>
</dbReference>
<dbReference type="GO" id="GO:0006952">
    <property type="term" value="P:defense response"/>
    <property type="evidence" value="ECO:0007669"/>
    <property type="project" value="InterPro"/>
</dbReference>
<dbReference type="CDD" id="cd23106">
    <property type="entry name" value="neurotoxins_LC_scorpion"/>
    <property type="match status" value="1"/>
</dbReference>
<dbReference type="FunFam" id="3.30.30.10:FF:000002">
    <property type="entry name" value="Alpha-like toxin BmK-M1"/>
    <property type="match status" value="1"/>
</dbReference>
<dbReference type="Gene3D" id="3.30.30.10">
    <property type="entry name" value="Knottin, scorpion toxin-like"/>
    <property type="match status" value="1"/>
</dbReference>
<dbReference type="InterPro" id="IPR044062">
    <property type="entry name" value="LCN-type_CS_alpha_beta_dom"/>
</dbReference>
<dbReference type="InterPro" id="IPR003614">
    <property type="entry name" value="Scorpion_toxin-like"/>
</dbReference>
<dbReference type="InterPro" id="IPR036574">
    <property type="entry name" value="Scorpion_toxin-like_sf"/>
</dbReference>
<dbReference type="InterPro" id="IPR018218">
    <property type="entry name" value="Scorpion_toxinL"/>
</dbReference>
<dbReference type="InterPro" id="IPR002061">
    <property type="entry name" value="Scorpion_toxinL/defensin"/>
</dbReference>
<dbReference type="Pfam" id="PF00537">
    <property type="entry name" value="Toxin_3"/>
    <property type="match status" value="1"/>
</dbReference>
<dbReference type="PRINTS" id="PR00285">
    <property type="entry name" value="SCORPNTOXIN"/>
</dbReference>
<dbReference type="SMART" id="SM00505">
    <property type="entry name" value="Knot1"/>
    <property type="match status" value="1"/>
</dbReference>
<dbReference type="SUPFAM" id="SSF57095">
    <property type="entry name" value="Scorpion toxin-like"/>
    <property type="match status" value="1"/>
</dbReference>
<dbReference type="PROSITE" id="PS51863">
    <property type="entry name" value="LCN_CSAB"/>
    <property type="match status" value="1"/>
</dbReference>
<accession>Q1I165</accession>
<reference key="1">
    <citation type="journal article" date="2006" name="Comp. Biochem. Physiol.">
        <title>Diversity of long-chain toxins in Tityus zulianus and Tityus discrepans venoms (Scorpiones, Buthidae): molecular, immunological, and mass spectral analyses.</title>
        <authorList>
            <person name="Borges A."/>
            <person name="Garcia C.C."/>
            <person name="Lugo E."/>
            <person name="Alfonzo M.J."/>
            <person name="Jowers M.J."/>
            <person name="Op den Camp H.J.M."/>
        </authorList>
    </citation>
    <scope>NUCLEOTIDE SEQUENCE [MRNA]</scope>
    <scope>MASS SPECTROMETRY</scope>
    <source>
        <tissue>Venom</tissue>
        <tissue>Venom gland</tissue>
    </source>
</reference>
<reference key="2">
    <citation type="journal article" date="2012" name="PLoS ONE">
        <title>Identification and phylogenetic analysis of Tityus pachyurus and Tityus obscurus novel putative Na+-channel scorpion toxins.</title>
        <authorList>
            <person name="Guerrero-Vargas J.A."/>
            <person name="Mourao C.B."/>
            <person name="Quintero-Hernandez V."/>
            <person name="Possani L.D."/>
            <person name="Schwartz E.F."/>
        </authorList>
    </citation>
    <scope>NOMENCLATURE</scope>
</reference>
<keyword id="KW-1015">Disulfide bond</keyword>
<keyword id="KW-0872">Ion channel impairing toxin</keyword>
<keyword id="KW-0528">Neurotoxin</keyword>
<keyword id="KW-0964">Secreted</keyword>
<keyword id="KW-0732">Signal</keyword>
<keyword id="KW-0800">Toxin</keyword>
<keyword id="KW-0738">Voltage-gated sodium channel impairing toxin</keyword>
<feature type="signal peptide" evidence="1">
    <location>
        <begin position="1" status="less than"/>
        <end position="7"/>
    </location>
</feature>
<feature type="chain" id="PRO_0000253777" description="Toxin Tz2">
    <location>
        <begin position="8"/>
        <end position="69"/>
    </location>
</feature>
<feature type="domain" description="LCN-type CS-alpha/beta" evidence="2">
    <location>
        <begin position="8"/>
        <end position="69"/>
    </location>
</feature>
<feature type="disulfide bond" evidence="2">
    <location>
        <begin position="19"/>
        <end position="69"/>
    </location>
</feature>
<feature type="disulfide bond" evidence="2">
    <location>
        <begin position="23"/>
        <end position="45"/>
    </location>
</feature>
<feature type="disulfide bond" evidence="2">
    <location>
        <begin position="31"/>
        <end position="50"/>
    </location>
</feature>
<feature type="disulfide bond" evidence="2">
    <location>
        <begin position="35"/>
        <end position="52"/>
    </location>
</feature>
<feature type="non-terminal residue">
    <location>
        <position position="1"/>
    </location>
</feature>
<comment type="function">
    <text evidence="1">Beta toxins bind voltage-independently at site-4 of sodium channels (Nav) and shift the voltage of activation toward more negative potentials thereby affecting sodium channel activation and promoting spontaneous and repetitive firing.</text>
</comment>
<comment type="subcellular location">
    <subcellularLocation>
        <location>Secreted</location>
    </subcellularLocation>
</comment>
<comment type="tissue specificity">
    <text>Expressed by the venom gland.</text>
</comment>
<comment type="domain">
    <text evidence="4">Has the structural arrangement of an alpha-helix connected to antiparallel beta-sheets by disulfide bonds (CS-alpha/beta).</text>
</comment>
<comment type="mass spectrometry" mass="7127.1" method="MALDI" evidence="3"/>
<comment type="miscellaneous">
    <text evidence="1">Negative results: does not affect the cardiac Nav1.5/SCN5A, the peripheral nerve channel Nav1.7/SCN9A, and the voltage-dependent potassium channel Kv1.5/KCNA5.</text>
</comment>
<comment type="similarity">
    <text evidence="4">Belongs to the long (4 C-C) scorpion toxin superfamily. Sodium channel inhibitor family. Beta subfamily.</text>
</comment>
<proteinExistence type="evidence at protein level"/>
<name>SCX2_TITZU</name>
<protein>
    <recommendedName>
        <fullName>Toxin Tz2</fullName>
    </recommendedName>
    <alternativeName>
        <fullName>P*T-beta* NaTx1.1</fullName>
    </alternativeName>
</protein>